<reference key="1">
    <citation type="journal article" date="2013" name="Toxins">
        <title>A proteomics and transcriptomics investigation of the venom from the barychelid spider Trittame loki (brush-foot trapdoor).</title>
        <authorList>
            <person name="Undheim E.A."/>
            <person name="Sunagar K."/>
            <person name="Herzig V."/>
            <person name="Kely L."/>
            <person name="Low D.H."/>
            <person name="Jackson T.N."/>
            <person name="Jones A."/>
            <person name="Kurniawan N."/>
            <person name="King G.F."/>
            <person name="Ali S.A."/>
            <person name="Antunes A."/>
            <person name="Ruder T."/>
            <person name="Fry B.G."/>
        </authorList>
    </citation>
    <scope>NUCLEOTIDE SEQUENCE [MRNA]</scope>
    <scope>IDENTIFICATION BY MASS SPECTROMETRY</scope>
    <scope>SUBCELLULAR LOCATION</scope>
    <source>
        <tissue>Venom</tissue>
        <tissue>Venom gland</tissue>
    </source>
</reference>
<organism>
    <name type="scientific">Trittame loki</name>
    <name type="common">Brush-footed trapdoor spider</name>
    <dbReference type="NCBI Taxonomy" id="1295018"/>
    <lineage>
        <taxon>Eukaryota</taxon>
        <taxon>Metazoa</taxon>
        <taxon>Ecdysozoa</taxon>
        <taxon>Arthropoda</taxon>
        <taxon>Chelicerata</taxon>
        <taxon>Arachnida</taxon>
        <taxon>Araneae</taxon>
        <taxon>Mygalomorphae</taxon>
        <taxon>Barychelidae</taxon>
        <taxon>Trittame</taxon>
    </lineage>
</organism>
<feature type="signal peptide" evidence="1">
    <location>
        <begin position="1"/>
        <end position="18"/>
    </location>
</feature>
<feature type="chain" id="PRO_0000429206" description="CRISP/Allergen/PR-1" evidence="4">
    <location>
        <begin position="19"/>
        <end position="406"/>
    </location>
</feature>
<feature type="domain" description="SCP" evidence="1">
    <location>
        <begin position="58"/>
        <end position="205"/>
    </location>
</feature>
<feature type="glycosylation site" description="N-linked (GlcNAc...) asparagine" evidence="1">
    <location>
        <position position="39"/>
    </location>
</feature>
<proteinExistence type="evidence at protein level"/>
<keyword id="KW-1015">Disulfide bond</keyword>
<keyword id="KW-0325">Glycoprotein</keyword>
<keyword id="KW-0964">Secreted</keyword>
<keyword id="KW-0732">Signal</keyword>
<comment type="subcellular location">
    <subcellularLocation>
        <location evidence="2">Secreted</location>
    </subcellularLocation>
</comment>
<comment type="tissue specificity">
    <text evidence="4">Expressed by the venom gland.</text>
</comment>
<comment type="PTM">
    <text evidence="3">Contains 9 disulfide bonds.</text>
</comment>
<comment type="similarity">
    <text evidence="3">Belongs to the CRISP family.</text>
</comment>
<protein>
    <recommendedName>
        <fullName>CRISP/Allergen/PR-1</fullName>
        <shortName>Cap-1</shortName>
    </recommendedName>
</protein>
<name>CRVP_TRILK</name>
<evidence type="ECO:0000255" key="1"/>
<evidence type="ECO:0000269" key="2">
    <source>
    </source>
</evidence>
<evidence type="ECO:0000305" key="3"/>
<evidence type="ECO:0000305" key="4">
    <source>
    </source>
</evidence>
<sequence length="406" mass="44514">MHFQVILMMMWLWLEAEGGTCPTLYKRYSKHHTYCLHPNSTCKILTRGVSSGDKEIILREHNKLRSRVATGKETKYSLPKASDMMQLVWDDELASVAQKHADQCVFEHDCNDCRNVQNFGVGQNLHLRTSSAKFSDITWAGAVNGWYDEVKDFNKRQISGFIDGKGPPQTGHFTQAVWATSWRVGCGRSMFKDGNTFKDLYTCNYGPGGNMKNAIIYTKGKPCSGCPLNSCCGKACGGISYDGLCKMSGNTAPQYSPPKGFAFRCTFNGESDCATTTSGAKKWKTIKTLSGSFIGIVLNPGESSTLSFTVPFGVSDGSMCVESYYRKGPQVAGQVAAGNAVEKFGDPADPSFDYSTPLKESTDFMQFGVTLGWNTKTTLSVVFSVPPGTAPQYLEMKDISVRKGEC</sequence>
<accession>W4VS53</accession>
<dbReference type="EMBL" id="GAQE01000003">
    <property type="protein sequence ID" value="JAB84551.1"/>
    <property type="molecule type" value="Transcribed_RNA"/>
</dbReference>
<dbReference type="SMR" id="W4VS53"/>
<dbReference type="ArachnoServer" id="AS001967">
    <property type="toxin name" value="CRISP-1-Trittame loki"/>
</dbReference>
<dbReference type="GO" id="GO:0005576">
    <property type="term" value="C:extracellular region"/>
    <property type="evidence" value="ECO:0007669"/>
    <property type="project" value="UniProtKB-SubCell"/>
</dbReference>
<dbReference type="CDD" id="cd05380">
    <property type="entry name" value="CAP_euk"/>
    <property type="match status" value="1"/>
</dbReference>
<dbReference type="Gene3D" id="3.40.33.10">
    <property type="entry name" value="CAP"/>
    <property type="match status" value="1"/>
</dbReference>
<dbReference type="InterPro" id="IPR018244">
    <property type="entry name" value="Allrgn_V5/Tpx1_CS"/>
</dbReference>
<dbReference type="InterPro" id="IPR014044">
    <property type="entry name" value="CAP_dom"/>
</dbReference>
<dbReference type="InterPro" id="IPR035940">
    <property type="entry name" value="CAP_sf"/>
</dbReference>
<dbReference type="InterPro" id="IPR001283">
    <property type="entry name" value="CRISP-related"/>
</dbReference>
<dbReference type="InterPro" id="IPR002413">
    <property type="entry name" value="V5_allergen-like"/>
</dbReference>
<dbReference type="PANTHER" id="PTHR10334">
    <property type="entry name" value="CYSTEINE-RICH SECRETORY PROTEIN-RELATED"/>
    <property type="match status" value="1"/>
</dbReference>
<dbReference type="Pfam" id="PF00188">
    <property type="entry name" value="CAP"/>
    <property type="match status" value="1"/>
</dbReference>
<dbReference type="PRINTS" id="PR00838">
    <property type="entry name" value="V5ALLERGEN"/>
</dbReference>
<dbReference type="PRINTS" id="PR00837">
    <property type="entry name" value="V5TPXLIKE"/>
</dbReference>
<dbReference type="SMART" id="SM00198">
    <property type="entry name" value="SCP"/>
    <property type="match status" value="1"/>
</dbReference>
<dbReference type="SUPFAM" id="SSF55797">
    <property type="entry name" value="PR-1-like"/>
    <property type="match status" value="1"/>
</dbReference>
<dbReference type="PROSITE" id="PS01010">
    <property type="entry name" value="CRISP_2"/>
    <property type="match status" value="1"/>
</dbReference>